<feature type="chain" id="PRO_0000142919" description="Porphobilinogen deaminase">
    <location>
        <begin position="1"/>
        <end position="307"/>
    </location>
</feature>
<feature type="modified residue" description="S-(dipyrrolylmethanemethyl)cysteine" evidence="1">
    <location>
        <position position="239"/>
    </location>
</feature>
<feature type="sequence conflict" description="In Ref. 2; CAA04300." evidence="2" ref="2">
    <original>N</original>
    <variation>H</variation>
    <location>
        <position position="205"/>
    </location>
</feature>
<dbReference type="EC" id="2.5.1.61"/>
<dbReference type="EMBL" id="AL111168">
    <property type="protein sequence ID" value="CAL34691.1"/>
    <property type="molecule type" value="Genomic_DNA"/>
</dbReference>
<dbReference type="EMBL" id="AJ000752">
    <property type="protein sequence ID" value="CAA04300.1"/>
    <property type="molecule type" value="Genomic_DNA"/>
</dbReference>
<dbReference type="PIR" id="A81401">
    <property type="entry name" value="A81401"/>
</dbReference>
<dbReference type="RefSeq" id="WP_002856753.1">
    <property type="nucleotide sequence ID" value="NZ_SZUC01000002.1"/>
</dbReference>
<dbReference type="RefSeq" id="YP_002343976.1">
    <property type="nucleotide sequence ID" value="NC_002163.1"/>
</dbReference>
<dbReference type="SMR" id="Q9PHW9"/>
<dbReference type="IntAct" id="Q9PHW9">
    <property type="interactions" value="2"/>
</dbReference>
<dbReference type="STRING" id="192222.Cj0545"/>
<dbReference type="PaxDb" id="192222-Cj0545"/>
<dbReference type="EnsemblBacteria" id="CAL34691">
    <property type="protein sequence ID" value="CAL34691"/>
    <property type="gene ID" value="Cj0545"/>
</dbReference>
<dbReference type="GeneID" id="904871"/>
<dbReference type="KEGG" id="cje:Cj0545"/>
<dbReference type="PATRIC" id="fig|192222.6.peg.537"/>
<dbReference type="eggNOG" id="COG0181">
    <property type="taxonomic scope" value="Bacteria"/>
</dbReference>
<dbReference type="HOGENOM" id="CLU_019704_1_0_7"/>
<dbReference type="OrthoDB" id="9810298at2"/>
<dbReference type="UniPathway" id="UPA00251">
    <property type="reaction ID" value="UER00319"/>
</dbReference>
<dbReference type="Proteomes" id="UP000000799">
    <property type="component" value="Chromosome"/>
</dbReference>
<dbReference type="GO" id="GO:0005737">
    <property type="term" value="C:cytoplasm"/>
    <property type="evidence" value="ECO:0007669"/>
    <property type="project" value="TreeGrafter"/>
</dbReference>
<dbReference type="GO" id="GO:0004418">
    <property type="term" value="F:hydroxymethylbilane synthase activity"/>
    <property type="evidence" value="ECO:0007669"/>
    <property type="project" value="UniProtKB-UniRule"/>
</dbReference>
<dbReference type="GO" id="GO:0006782">
    <property type="term" value="P:protoporphyrinogen IX biosynthetic process"/>
    <property type="evidence" value="ECO:0007669"/>
    <property type="project" value="UniProtKB-UniRule"/>
</dbReference>
<dbReference type="CDD" id="cd13646">
    <property type="entry name" value="PBP2_EcHMBS_like"/>
    <property type="match status" value="1"/>
</dbReference>
<dbReference type="FunFam" id="3.40.190.10:FF:000004">
    <property type="entry name" value="Porphobilinogen deaminase"/>
    <property type="match status" value="1"/>
</dbReference>
<dbReference type="FunFam" id="3.40.190.10:FF:000005">
    <property type="entry name" value="Porphobilinogen deaminase"/>
    <property type="match status" value="1"/>
</dbReference>
<dbReference type="Gene3D" id="3.40.190.10">
    <property type="entry name" value="Periplasmic binding protein-like II"/>
    <property type="match status" value="2"/>
</dbReference>
<dbReference type="Gene3D" id="3.30.160.40">
    <property type="entry name" value="Porphobilinogen deaminase, C-terminal domain"/>
    <property type="match status" value="1"/>
</dbReference>
<dbReference type="HAMAP" id="MF_00260">
    <property type="entry name" value="Porphobil_deam"/>
    <property type="match status" value="1"/>
</dbReference>
<dbReference type="InterPro" id="IPR000860">
    <property type="entry name" value="HemC"/>
</dbReference>
<dbReference type="InterPro" id="IPR022419">
    <property type="entry name" value="Porphobilin_deaminase_cofac_BS"/>
</dbReference>
<dbReference type="InterPro" id="IPR022417">
    <property type="entry name" value="Porphobilin_deaminase_N"/>
</dbReference>
<dbReference type="InterPro" id="IPR022418">
    <property type="entry name" value="Porphobilinogen_deaminase_C"/>
</dbReference>
<dbReference type="InterPro" id="IPR036803">
    <property type="entry name" value="Porphobilinogen_deaminase_C_sf"/>
</dbReference>
<dbReference type="NCBIfam" id="TIGR00212">
    <property type="entry name" value="hemC"/>
    <property type="match status" value="1"/>
</dbReference>
<dbReference type="PANTHER" id="PTHR11557">
    <property type="entry name" value="PORPHOBILINOGEN DEAMINASE"/>
    <property type="match status" value="1"/>
</dbReference>
<dbReference type="PANTHER" id="PTHR11557:SF0">
    <property type="entry name" value="PORPHOBILINOGEN DEAMINASE"/>
    <property type="match status" value="1"/>
</dbReference>
<dbReference type="Pfam" id="PF01379">
    <property type="entry name" value="Porphobil_deam"/>
    <property type="match status" value="1"/>
</dbReference>
<dbReference type="Pfam" id="PF03900">
    <property type="entry name" value="Porphobil_deamC"/>
    <property type="match status" value="1"/>
</dbReference>
<dbReference type="PIRSF" id="PIRSF001438">
    <property type="entry name" value="4pyrrol_synth_OHMeBilane_synth"/>
    <property type="match status" value="1"/>
</dbReference>
<dbReference type="PRINTS" id="PR00151">
    <property type="entry name" value="PORPHBDMNASE"/>
</dbReference>
<dbReference type="SUPFAM" id="SSF53850">
    <property type="entry name" value="Periplasmic binding protein-like II"/>
    <property type="match status" value="1"/>
</dbReference>
<dbReference type="SUPFAM" id="SSF54782">
    <property type="entry name" value="Porphobilinogen deaminase (hydroxymethylbilane synthase), C-terminal domain"/>
    <property type="match status" value="1"/>
</dbReference>
<dbReference type="PROSITE" id="PS00533">
    <property type="entry name" value="PORPHOBILINOGEN_DEAM"/>
    <property type="match status" value="1"/>
</dbReference>
<organism>
    <name type="scientific">Campylobacter jejuni subsp. jejuni serotype O:2 (strain ATCC 700819 / NCTC 11168)</name>
    <dbReference type="NCBI Taxonomy" id="192222"/>
    <lineage>
        <taxon>Bacteria</taxon>
        <taxon>Pseudomonadati</taxon>
        <taxon>Campylobacterota</taxon>
        <taxon>Epsilonproteobacteria</taxon>
        <taxon>Campylobacterales</taxon>
        <taxon>Campylobacteraceae</taxon>
        <taxon>Campylobacter</taxon>
    </lineage>
</organism>
<name>HEM3_CAMJE</name>
<comment type="function">
    <text evidence="1">Tetrapolymerization of the monopyrrole PBG into the hydroxymethylbilane pre-uroporphyrinogen in several discrete steps.</text>
</comment>
<comment type="catalytic activity">
    <reaction>
        <text>4 porphobilinogen + H2O = hydroxymethylbilane + 4 NH4(+)</text>
        <dbReference type="Rhea" id="RHEA:13185"/>
        <dbReference type="ChEBI" id="CHEBI:15377"/>
        <dbReference type="ChEBI" id="CHEBI:28938"/>
        <dbReference type="ChEBI" id="CHEBI:57845"/>
        <dbReference type="ChEBI" id="CHEBI:58126"/>
        <dbReference type="EC" id="2.5.1.61"/>
    </reaction>
</comment>
<comment type="cofactor">
    <cofactor evidence="1">
        <name>dipyrromethane</name>
        <dbReference type="ChEBI" id="CHEBI:60342"/>
    </cofactor>
    <text evidence="1">Binds 1 dipyrromethane group covalently.</text>
</comment>
<comment type="pathway">
    <text>Porphyrin-containing compound metabolism; protoporphyrin-IX biosynthesis; coproporphyrinogen-III from 5-aminolevulinate: step 2/4.</text>
</comment>
<comment type="subunit">
    <text evidence="1">Monomer.</text>
</comment>
<comment type="miscellaneous">
    <text evidence="1">The porphobilinogen subunits are added to the dipyrromethane group.</text>
</comment>
<comment type="similarity">
    <text evidence="2">Belongs to the HMBS family.</text>
</comment>
<evidence type="ECO:0000250" key="1"/>
<evidence type="ECO:0000305" key="2"/>
<reference key="1">
    <citation type="journal article" date="2000" name="Nature">
        <title>The genome sequence of the food-borne pathogen Campylobacter jejuni reveals hypervariable sequences.</title>
        <authorList>
            <person name="Parkhill J."/>
            <person name="Wren B.W."/>
            <person name="Mungall K.L."/>
            <person name="Ketley J.M."/>
            <person name="Churcher C.M."/>
            <person name="Basham D."/>
            <person name="Chillingworth T."/>
            <person name="Davies R.M."/>
            <person name="Feltwell T."/>
            <person name="Holroyd S."/>
            <person name="Jagels K."/>
            <person name="Karlyshev A.V."/>
            <person name="Moule S."/>
            <person name="Pallen M.J."/>
            <person name="Penn C.W."/>
            <person name="Quail M.A."/>
            <person name="Rajandream M.A."/>
            <person name="Rutherford K.M."/>
            <person name="van Vliet A.H.M."/>
            <person name="Whitehead S."/>
            <person name="Barrell B.G."/>
        </authorList>
    </citation>
    <scope>NUCLEOTIDE SEQUENCE [LARGE SCALE GENOMIC DNA]</scope>
    <source>
        <strain>ATCC 700819 / NCTC 11168</strain>
    </source>
</reference>
<reference key="2">
    <citation type="submission" date="1997-09" db="EMBL/GenBank/DDBJ databases">
        <title>Cloning and characterisation of C. jejuni hemC gene.</title>
        <authorList>
            <person name="Karlyshev A.V."/>
            <person name="Wren B.W."/>
        </authorList>
    </citation>
    <scope>NUCLEOTIDE SEQUENCE [GENOMIC DNA] OF 199-286</scope>
    <source>
        <strain>ATCC 700819 / NCTC 11168</strain>
    </source>
</reference>
<accession>Q9PHW9</accession>
<accession>O32364</accession>
<accession>Q0PAX1</accession>
<protein>
    <recommendedName>
        <fullName>Porphobilinogen deaminase</fullName>
        <shortName>PBG</shortName>
        <ecNumber>2.5.1.61</ecNumber>
    </recommendedName>
    <alternativeName>
        <fullName>Hydroxymethylbilane synthase</fullName>
        <shortName>HMBS</shortName>
    </alternativeName>
    <alternativeName>
        <fullName>Pre-uroporphyrinogen synthase</fullName>
    </alternativeName>
</protein>
<keyword id="KW-0627">Porphyrin biosynthesis</keyword>
<keyword id="KW-1185">Reference proteome</keyword>
<keyword id="KW-0808">Transferase</keyword>
<gene>
    <name type="primary">hemC</name>
    <name type="ordered locus">Cj0545</name>
</gene>
<proteinExistence type="inferred from homology"/>
<sequence>MKLIIATRKSQLALWQSEHVAQILKNTHQIEVLLEGFKTKGDVLLDSPLAKIGGKGLFTKELEESMLRKEAHLAVHSLKDVPSFFPQGLVLAAVSKREQSNDAMLSQNYKDFLSLPKGAKIGTTSLRRKMQLLLLRPDLEIISLRGNVNSRIEKLKNNDFDAIILAMAGIKRLNLDKQVNFVYEFSKDELIPAASQGALGIESINDEKILELLKCLNDENALIETSIEREFIATLEGGCQVPIGINAELLGDEICVRAVLGLPDGSEILKDKRMIKKNDFKGFGESLAKEFIAKGAKELLKKAESMI</sequence>